<accession>B5Y342</accession>
<feature type="chain" id="PRO_1000131384" description="Phosphatidylserine decarboxylase beta chain" evidence="1">
    <location>
        <begin position="1"/>
        <end position="253"/>
    </location>
</feature>
<feature type="chain" id="PRO_1000131385" description="Phosphatidylserine decarboxylase alpha chain" evidence="1">
    <location>
        <begin position="254"/>
        <end position="320"/>
    </location>
</feature>
<feature type="region of interest" description="Disordered" evidence="2">
    <location>
        <begin position="288"/>
        <end position="320"/>
    </location>
</feature>
<feature type="active site" description="Charge relay system; for autoendoproteolytic cleavage activity" evidence="1">
    <location>
        <position position="90"/>
    </location>
</feature>
<feature type="active site" description="Charge relay system; for autoendoproteolytic cleavage activity" evidence="1">
    <location>
        <position position="147"/>
    </location>
</feature>
<feature type="active site" description="Charge relay system; for autoendoproteolytic cleavage activity" evidence="1">
    <location>
        <position position="254"/>
    </location>
</feature>
<feature type="active site" description="Schiff-base intermediate with substrate; via pyruvic acid; for decarboxylase activity" evidence="1">
    <location>
        <position position="254"/>
    </location>
</feature>
<feature type="site" description="Cleavage (non-hydrolytic); by autocatalysis" evidence="1">
    <location>
        <begin position="253"/>
        <end position="254"/>
    </location>
</feature>
<feature type="modified residue" description="Pyruvic acid (Ser); by autocatalysis" evidence="1">
    <location>
        <position position="254"/>
    </location>
</feature>
<gene>
    <name evidence="1" type="primary">psd</name>
    <name type="ordered locus">KPK_5111</name>
</gene>
<proteinExistence type="inferred from homology"/>
<protein>
    <recommendedName>
        <fullName evidence="1">Phosphatidylserine decarboxylase proenzyme</fullName>
        <ecNumber evidence="1">4.1.1.65</ecNumber>
    </recommendedName>
    <component>
        <recommendedName>
            <fullName evidence="1">Phosphatidylserine decarboxylase alpha chain</fullName>
        </recommendedName>
    </component>
    <component>
        <recommendedName>
            <fullName evidence="1">Phosphatidylserine decarboxylase beta chain</fullName>
        </recommendedName>
    </component>
</protein>
<evidence type="ECO:0000255" key="1">
    <source>
        <dbReference type="HAMAP-Rule" id="MF_00662"/>
    </source>
</evidence>
<evidence type="ECO:0000256" key="2">
    <source>
        <dbReference type="SAM" id="MobiDB-lite"/>
    </source>
</evidence>
<name>PSD_KLEP3</name>
<keyword id="KW-1003">Cell membrane</keyword>
<keyword id="KW-0210">Decarboxylase</keyword>
<keyword id="KW-0444">Lipid biosynthesis</keyword>
<keyword id="KW-0443">Lipid metabolism</keyword>
<keyword id="KW-0456">Lyase</keyword>
<keyword id="KW-0472">Membrane</keyword>
<keyword id="KW-0594">Phospholipid biosynthesis</keyword>
<keyword id="KW-1208">Phospholipid metabolism</keyword>
<keyword id="KW-0670">Pyruvate</keyword>
<keyword id="KW-0865">Zymogen</keyword>
<reference key="1">
    <citation type="journal article" date="2008" name="PLoS Genet.">
        <title>Complete genome sequence of the N2-fixing broad host range endophyte Klebsiella pneumoniae 342 and virulence predictions verified in mice.</title>
        <authorList>
            <person name="Fouts D.E."/>
            <person name="Tyler H.L."/>
            <person name="DeBoy R.T."/>
            <person name="Daugherty S."/>
            <person name="Ren Q."/>
            <person name="Badger J.H."/>
            <person name="Durkin A.S."/>
            <person name="Huot H."/>
            <person name="Shrivastava S."/>
            <person name="Kothari S."/>
            <person name="Dodson R.J."/>
            <person name="Mohamoud Y."/>
            <person name="Khouri H."/>
            <person name="Roesch L.F.W."/>
            <person name="Krogfelt K.A."/>
            <person name="Struve C."/>
            <person name="Triplett E.W."/>
            <person name="Methe B.A."/>
        </authorList>
    </citation>
    <scope>NUCLEOTIDE SEQUENCE [LARGE SCALE GENOMIC DNA]</scope>
    <source>
        <strain>342</strain>
    </source>
</reference>
<comment type="function">
    <text evidence="1">Catalyzes the formation of phosphatidylethanolamine (PtdEtn) from phosphatidylserine (PtdSer).</text>
</comment>
<comment type="catalytic activity">
    <reaction evidence="1">
        <text>a 1,2-diacyl-sn-glycero-3-phospho-L-serine + H(+) = a 1,2-diacyl-sn-glycero-3-phosphoethanolamine + CO2</text>
        <dbReference type="Rhea" id="RHEA:20828"/>
        <dbReference type="ChEBI" id="CHEBI:15378"/>
        <dbReference type="ChEBI" id="CHEBI:16526"/>
        <dbReference type="ChEBI" id="CHEBI:57262"/>
        <dbReference type="ChEBI" id="CHEBI:64612"/>
        <dbReference type="EC" id="4.1.1.65"/>
    </reaction>
</comment>
<comment type="cofactor">
    <cofactor evidence="1">
        <name>pyruvate</name>
        <dbReference type="ChEBI" id="CHEBI:15361"/>
    </cofactor>
    <text evidence="1">Binds 1 pyruvoyl group covalently per subunit.</text>
</comment>
<comment type="pathway">
    <text evidence="1">Phospholipid metabolism; phosphatidylethanolamine biosynthesis; phosphatidylethanolamine from CDP-diacylglycerol: step 2/2.</text>
</comment>
<comment type="subunit">
    <text evidence="1">Heterodimer of a large membrane-associated beta subunit and a small pyruvoyl-containing alpha subunit.</text>
</comment>
<comment type="subcellular location">
    <subcellularLocation>
        <location evidence="1">Cell membrane</location>
        <topology evidence="1">Peripheral membrane protein</topology>
    </subcellularLocation>
</comment>
<comment type="PTM">
    <text evidence="1">Is synthesized initially as an inactive proenzyme. Formation of the active enzyme involves a self-maturation process in which the active site pyruvoyl group is generated from an internal serine residue via an autocatalytic post-translational modification. Two non-identical subunits are generated from the proenzyme in this reaction, and the pyruvate is formed at the N-terminus of the alpha chain, which is derived from the carboxyl end of the proenzyme. The autoendoproteolytic cleavage occurs by a canonical serine protease mechanism, in which the side chain hydroxyl group of the serine supplies its oxygen atom to form the C-terminus of the beta chain, while the remainder of the serine residue undergoes an oxidative deamination to produce ammonia and the pyruvoyl prosthetic group on the alpha chain. During this reaction, the Ser that is part of the protease active site of the proenzyme becomes the pyruvoyl prosthetic group, which constitutes an essential element of the active site of the mature decarboxylase.</text>
</comment>
<comment type="similarity">
    <text evidence="1">Belongs to the phosphatidylserine decarboxylase family. PSD-B subfamily. Prokaryotic type I sub-subfamily.</text>
</comment>
<sequence>MLNDLKLSLQYILPKLWLTRLAGWGASKRAGWLTKLVIDLFVKYYKVDMKEAQKPDTAAYRTFNDFFVRPLRDDVRPLNTDPNVLVMPADGVISQLGAIEDDKILQAKGHDYSLEALLAGNYQMAGLFRNGSFATTYLSPRDYHRVHMPCNGILREMIYVPGDLFSVNHLTAQNVPNLFARNERVICLFDTEFGPMAQILVGATIVGSIETVWSGTVTPPREGIIKRWTWPAGDSEGSVALLKGQEMGRFKLGSTVINLFAPGQVKLVDSLQSLSVTKIGQPLATAVEASTAAEPAPLPEEEIRAEHRASPLVDDTQDQG</sequence>
<organism>
    <name type="scientific">Klebsiella pneumoniae (strain 342)</name>
    <dbReference type="NCBI Taxonomy" id="507522"/>
    <lineage>
        <taxon>Bacteria</taxon>
        <taxon>Pseudomonadati</taxon>
        <taxon>Pseudomonadota</taxon>
        <taxon>Gammaproteobacteria</taxon>
        <taxon>Enterobacterales</taxon>
        <taxon>Enterobacteriaceae</taxon>
        <taxon>Klebsiella/Raoultella group</taxon>
        <taxon>Klebsiella</taxon>
        <taxon>Klebsiella pneumoniae complex</taxon>
    </lineage>
</organism>
<dbReference type="EC" id="4.1.1.65" evidence="1"/>
<dbReference type="EMBL" id="CP000964">
    <property type="protein sequence ID" value="ACI09352.1"/>
    <property type="molecule type" value="Genomic_DNA"/>
</dbReference>
<dbReference type="SMR" id="B5Y342"/>
<dbReference type="KEGG" id="kpe:KPK_5111"/>
<dbReference type="HOGENOM" id="CLU_029061_4_1_6"/>
<dbReference type="UniPathway" id="UPA00558">
    <property type="reaction ID" value="UER00616"/>
</dbReference>
<dbReference type="Proteomes" id="UP000001734">
    <property type="component" value="Chromosome"/>
</dbReference>
<dbReference type="GO" id="GO:0005886">
    <property type="term" value="C:plasma membrane"/>
    <property type="evidence" value="ECO:0007669"/>
    <property type="project" value="UniProtKB-SubCell"/>
</dbReference>
<dbReference type="GO" id="GO:0004609">
    <property type="term" value="F:phosphatidylserine decarboxylase activity"/>
    <property type="evidence" value="ECO:0007669"/>
    <property type="project" value="UniProtKB-UniRule"/>
</dbReference>
<dbReference type="GO" id="GO:0006646">
    <property type="term" value="P:phosphatidylethanolamine biosynthetic process"/>
    <property type="evidence" value="ECO:0007669"/>
    <property type="project" value="UniProtKB-UniRule"/>
</dbReference>
<dbReference type="HAMAP" id="MF_00662">
    <property type="entry name" value="PS_decarb_PSD_B_type1"/>
    <property type="match status" value="1"/>
</dbReference>
<dbReference type="InterPro" id="IPR003817">
    <property type="entry name" value="PS_Dcarbxylase"/>
</dbReference>
<dbReference type="InterPro" id="IPR033177">
    <property type="entry name" value="PSD-B"/>
</dbReference>
<dbReference type="InterPro" id="IPR033178">
    <property type="entry name" value="PSD_type1_pro"/>
</dbReference>
<dbReference type="NCBIfam" id="TIGR00163">
    <property type="entry name" value="PS_decarb"/>
    <property type="match status" value="1"/>
</dbReference>
<dbReference type="PANTHER" id="PTHR10067">
    <property type="entry name" value="PHOSPHATIDYLSERINE DECARBOXYLASE"/>
    <property type="match status" value="1"/>
</dbReference>
<dbReference type="PANTHER" id="PTHR10067:SF6">
    <property type="entry name" value="PHOSPHATIDYLSERINE DECARBOXYLASE PROENZYME, MITOCHONDRIAL"/>
    <property type="match status" value="1"/>
</dbReference>
<dbReference type="Pfam" id="PF02666">
    <property type="entry name" value="PS_Dcarbxylase"/>
    <property type="match status" value="1"/>
</dbReference>